<name>PUR5_ESCF3</name>
<evidence type="ECO:0000255" key="1">
    <source>
        <dbReference type="HAMAP-Rule" id="MF_00741"/>
    </source>
</evidence>
<sequence length="345" mass="36844">MTEKTSLSYKDAGVDIDAGNALVDRIKGVVKKTRRPEVMGGLGGFGALCALPQKYREPVLVSGTDGVGTKLRLAMDLQRHDTIGIDLVAMCVNDLVVQGAEPLFFLDYYATGKLDVDTASSVISGIAEGCLQSGCALVGGETAEMPGMYHGEDYDVAGFCVGVVEKSEIIDGTKVTDGDVLIALGSSGPHSNGYSLVRKILEVSGCDPQTTQLAGKPLADHLLAPTRIYVKSVLELIDKVDVHAIAHLTGGGFWENIPRVLPENTQAVIDESSWQWPEVFNWLQTAGNVSRHEMYRTFNCGVGMIIALPEAEVENALALLNANGEKAWKIGVIKASDAEQRVVIA</sequence>
<protein>
    <recommendedName>
        <fullName evidence="1">Phosphoribosylformylglycinamidine cyclo-ligase</fullName>
        <ecNumber evidence="1">6.3.3.1</ecNumber>
    </recommendedName>
    <alternativeName>
        <fullName evidence="1">AIR synthase</fullName>
    </alternativeName>
    <alternativeName>
        <fullName evidence="1">AIRS</fullName>
    </alternativeName>
    <alternativeName>
        <fullName evidence="1">Phosphoribosyl-aminoimidazole synthetase</fullName>
    </alternativeName>
</protein>
<dbReference type="EC" id="6.3.3.1" evidence="1"/>
<dbReference type="EMBL" id="CU928158">
    <property type="protein sequence ID" value="CAQ88220.1"/>
    <property type="molecule type" value="Genomic_DNA"/>
</dbReference>
<dbReference type="RefSeq" id="WP_000137079.1">
    <property type="nucleotide sequence ID" value="NC_011740.1"/>
</dbReference>
<dbReference type="SMR" id="B7LKE3"/>
<dbReference type="GeneID" id="75058263"/>
<dbReference type="KEGG" id="efe:EFER_0677"/>
<dbReference type="HOGENOM" id="CLU_047116_0_0_6"/>
<dbReference type="OrthoDB" id="9777881at2"/>
<dbReference type="UniPathway" id="UPA00074">
    <property type="reaction ID" value="UER00129"/>
</dbReference>
<dbReference type="Proteomes" id="UP000000745">
    <property type="component" value="Chromosome"/>
</dbReference>
<dbReference type="GO" id="GO:0005829">
    <property type="term" value="C:cytosol"/>
    <property type="evidence" value="ECO:0007669"/>
    <property type="project" value="TreeGrafter"/>
</dbReference>
<dbReference type="GO" id="GO:0005524">
    <property type="term" value="F:ATP binding"/>
    <property type="evidence" value="ECO:0007669"/>
    <property type="project" value="UniProtKB-KW"/>
</dbReference>
<dbReference type="GO" id="GO:0004637">
    <property type="term" value="F:phosphoribosylamine-glycine ligase activity"/>
    <property type="evidence" value="ECO:0007669"/>
    <property type="project" value="TreeGrafter"/>
</dbReference>
<dbReference type="GO" id="GO:0004641">
    <property type="term" value="F:phosphoribosylformylglycinamidine cyclo-ligase activity"/>
    <property type="evidence" value="ECO:0007669"/>
    <property type="project" value="UniProtKB-UniRule"/>
</dbReference>
<dbReference type="GO" id="GO:0006189">
    <property type="term" value="P:'de novo' IMP biosynthetic process"/>
    <property type="evidence" value="ECO:0007669"/>
    <property type="project" value="UniProtKB-UniRule"/>
</dbReference>
<dbReference type="GO" id="GO:0046084">
    <property type="term" value="P:adenine biosynthetic process"/>
    <property type="evidence" value="ECO:0007669"/>
    <property type="project" value="TreeGrafter"/>
</dbReference>
<dbReference type="CDD" id="cd02196">
    <property type="entry name" value="PurM"/>
    <property type="match status" value="1"/>
</dbReference>
<dbReference type="FunFam" id="3.30.1330.10:FF:000001">
    <property type="entry name" value="Phosphoribosylformylglycinamidine cyclo-ligase"/>
    <property type="match status" value="1"/>
</dbReference>
<dbReference type="FunFam" id="3.90.650.10:FF:000001">
    <property type="entry name" value="Phosphoribosylformylglycinamidine cyclo-ligase"/>
    <property type="match status" value="1"/>
</dbReference>
<dbReference type="Gene3D" id="3.90.650.10">
    <property type="entry name" value="PurM-like C-terminal domain"/>
    <property type="match status" value="1"/>
</dbReference>
<dbReference type="Gene3D" id="3.30.1330.10">
    <property type="entry name" value="PurM-like, N-terminal domain"/>
    <property type="match status" value="1"/>
</dbReference>
<dbReference type="HAMAP" id="MF_00741">
    <property type="entry name" value="AIRS"/>
    <property type="match status" value="1"/>
</dbReference>
<dbReference type="InterPro" id="IPR010918">
    <property type="entry name" value="PurM-like_C_dom"/>
</dbReference>
<dbReference type="InterPro" id="IPR036676">
    <property type="entry name" value="PurM-like_C_sf"/>
</dbReference>
<dbReference type="InterPro" id="IPR016188">
    <property type="entry name" value="PurM-like_N"/>
</dbReference>
<dbReference type="InterPro" id="IPR036921">
    <property type="entry name" value="PurM-like_N_sf"/>
</dbReference>
<dbReference type="InterPro" id="IPR004733">
    <property type="entry name" value="PurM_cligase"/>
</dbReference>
<dbReference type="NCBIfam" id="TIGR00878">
    <property type="entry name" value="purM"/>
    <property type="match status" value="1"/>
</dbReference>
<dbReference type="PANTHER" id="PTHR10520:SF12">
    <property type="entry name" value="TRIFUNCTIONAL PURINE BIOSYNTHETIC PROTEIN ADENOSINE-3"/>
    <property type="match status" value="1"/>
</dbReference>
<dbReference type="PANTHER" id="PTHR10520">
    <property type="entry name" value="TRIFUNCTIONAL PURINE BIOSYNTHETIC PROTEIN ADENOSINE-3-RELATED"/>
    <property type="match status" value="1"/>
</dbReference>
<dbReference type="Pfam" id="PF00586">
    <property type="entry name" value="AIRS"/>
    <property type="match status" value="1"/>
</dbReference>
<dbReference type="Pfam" id="PF02769">
    <property type="entry name" value="AIRS_C"/>
    <property type="match status" value="1"/>
</dbReference>
<dbReference type="SUPFAM" id="SSF56042">
    <property type="entry name" value="PurM C-terminal domain-like"/>
    <property type="match status" value="1"/>
</dbReference>
<dbReference type="SUPFAM" id="SSF55326">
    <property type="entry name" value="PurM N-terminal domain-like"/>
    <property type="match status" value="1"/>
</dbReference>
<reference key="1">
    <citation type="journal article" date="2009" name="PLoS Genet.">
        <title>Organised genome dynamics in the Escherichia coli species results in highly diverse adaptive paths.</title>
        <authorList>
            <person name="Touchon M."/>
            <person name="Hoede C."/>
            <person name="Tenaillon O."/>
            <person name="Barbe V."/>
            <person name="Baeriswyl S."/>
            <person name="Bidet P."/>
            <person name="Bingen E."/>
            <person name="Bonacorsi S."/>
            <person name="Bouchier C."/>
            <person name="Bouvet O."/>
            <person name="Calteau A."/>
            <person name="Chiapello H."/>
            <person name="Clermont O."/>
            <person name="Cruveiller S."/>
            <person name="Danchin A."/>
            <person name="Diard M."/>
            <person name="Dossat C."/>
            <person name="Karoui M.E."/>
            <person name="Frapy E."/>
            <person name="Garry L."/>
            <person name="Ghigo J.M."/>
            <person name="Gilles A.M."/>
            <person name="Johnson J."/>
            <person name="Le Bouguenec C."/>
            <person name="Lescat M."/>
            <person name="Mangenot S."/>
            <person name="Martinez-Jehanne V."/>
            <person name="Matic I."/>
            <person name="Nassif X."/>
            <person name="Oztas S."/>
            <person name="Petit M.A."/>
            <person name="Pichon C."/>
            <person name="Rouy Z."/>
            <person name="Ruf C.S."/>
            <person name="Schneider D."/>
            <person name="Tourret J."/>
            <person name="Vacherie B."/>
            <person name="Vallenet D."/>
            <person name="Medigue C."/>
            <person name="Rocha E.P.C."/>
            <person name="Denamur E."/>
        </authorList>
    </citation>
    <scope>NUCLEOTIDE SEQUENCE [LARGE SCALE GENOMIC DNA]</scope>
    <source>
        <strain>ATCC 35469 / DSM 13698 / BCRC 15582 / CCUG 18766 / IAM 14443 / JCM 21226 / LMG 7866 / NBRC 102419 / NCTC 12128 / CDC 0568-73</strain>
    </source>
</reference>
<feature type="chain" id="PRO_1000193023" description="Phosphoribosylformylglycinamidine cyclo-ligase">
    <location>
        <begin position="1"/>
        <end position="345"/>
    </location>
</feature>
<organism>
    <name type="scientific">Escherichia fergusonii (strain ATCC 35469 / DSM 13698 / CCUG 18766 / IAM 14443 / JCM 21226 / LMG 7866 / NBRC 102419 / NCTC 12128 / CDC 0568-73)</name>
    <dbReference type="NCBI Taxonomy" id="585054"/>
    <lineage>
        <taxon>Bacteria</taxon>
        <taxon>Pseudomonadati</taxon>
        <taxon>Pseudomonadota</taxon>
        <taxon>Gammaproteobacteria</taxon>
        <taxon>Enterobacterales</taxon>
        <taxon>Enterobacteriaceae</taxon>
        <taxon>Escherichia</taxon>
    </lineage>
</organism>
<gene>
    <name evidence="1" type="primary">purM</name>
    <name type="ordered locus">EFER_0677</name>
</gene>
<comment type="catalytic activity">
    <reaction evidence="1">
        <text>2-formamido-N(1)-(5-O-phospho-beta-D-ribosyl)acetamidine + ATP = 5-amino-1-(5-phospho-beta-D-ribosyl)imidazole + ADP + phosphate + H(+)</text>
        <dbReference type="Rhea" id="RHEA:23032"/>
        <dbReference type="ChEBI" id="CHEBI:15378"/>
        <dbReference type="ChEBI" id="CHEBI:30616"/>
        <dbReference type="ChEBI" id="CHEBI:43474"/>
        <dbReference type="ChEBI" id="CHEBI:137981"/>
        <dbReference type="ChEBI" id="CHEBI:147287"/>
        <dbReference type="ChEBI" id="CHEBI:456216"/>
        <dbReference type="EC" id="6.3.3.1"/>
    </reaction>
</comment>
<comment type="pathway">
    <text evidence="1">Purine metabolism; IMP biosynthesis via de novo pathway; 5-amino-1-(5-phospho-D-ribosyl)imidazole from N(2)-formyl-N(1)-(5-phospho-D-ribosyl)glycinamide: step 2/2.</text>
</comment>
<comment type="subcellular location">
    <subcellularLocation>
        <location evidence="1">Cytoplasm</location>
    </subcellularLocation>
</comment>
<comment type="similarity">
    <text evidence="1">Belongs to the AIR synthase family.</text>
</comment>
<accession>B7LKE3</accession>
<proteinExistence type="inferred from homology"/>
<keyword id="KW-0067">ATP-binding</keyword>
<keyword id="KW-0963">Cytoplasm</keyword>
<keyword id="KW-0436">Ligase</keyword>
<keyword id="KW-0547">Nucleotide-binding</keyword>
<keyword id="KW-0658">Purine biosynthesis</keyword>